<gene>
    <name evidence="1" type="primary">secA</name>
    <name type="ordered locus">VFMJ11_2306</name>
</gene>
<evidence type="ECO:0000255" key="1">
    <source>
        <dbReference type="HAMAP-Rule" id="MF_01382"/>
    </source>
</evidence>
<evidence type="ECO:0000256" key="2">
    <source>
        <dbReference type="SAM" id="MobiDB-lite"/>
    </source>
</evidence>
<reference key="1">
    <citation type="submission" date="2008-08" db="EMBL/GenBank/DDBJ databases">
        <title>Complete sequence of Vibrio fischeri strain MJ11.</title>
        <authorList>
            <person name="Mandel M.J."/>
            <person name="Stabb E.V."/>
            <person name="Ruby E.G."/>
            <person name="Ferriera S."/>
            <person name="Johnson J."/>
            <person name="Kravitz S."/>
            <person name="Beeson K."/>
            <person name="Sutton G."/>
            <person name="Rogers Y.-H."/>
            <person name="Friedman R."/>
            <person name="Frazier M."/>
            <person name="Venter J.C."/>
        </authorList>
    </citation>
    <scope>NUCLEOTIDE SEQUENCE [LARGE SCALE GENOMIC DNA]</scope>
    <source>
        <strain>MJ11</strain>
    </source>
</reference>
<feature type="chain" id="PRO_1000145075" description="Protein translocase subunit SecA">
    <location>
        <begin position="1"/>
        <end position="907"/>
    </location>
</feature>
<feature type="region of interest" description="Disordered" evidence="2">
    <location>
        <begin position="834"/>
        <end position="907"/>
    </location>
</feature>
<feature type="compositionally biased region" description="Basic and acidic residues" evidence="2">
    <location>
        <begin position="836"/>
        <end position="853"/>
    </location>
</feature>
<feature type="compositionally biased region" description="Basic and acidic residues" evidence="2">
    <location>
        <begin position="873"/>
        <end position="888"/>
    </location>
</feature>
<feature type="compositionally biased region" description="Basic residues" evidence="2">
    <location>
        <begin position="898"/>
        <end position="907"/>
    </location>
</feature>
<feature type="binding site" evidence="1">
    <location>
        <position position="87"/>
    </location>
    <ligand>
        <name>ATP</name>
        <dbReference type="ChEBI" id="CHEBI:30616"/>
    </ligand>
</feature>
<feature type="binding site" evidence="1">
    <location>
        <begin position="105"/>
        <end position="109"/>
    </location>
    <ligand>
        <name>ATP</name>
        <dbReference type="ChEBI" id="CHEBI:30616"/>
    </ligand>
</feature>
<feature type="binding site" evidence="1">
    <location>
        <position position="512"/>
    </location>
    <ligand>
        <name>ATP</name>
        <dbReference type="ChEBI" id="CHEBI:30616"/>
    </ligand>
</feature>
<feature type="binding site" evidence="1">
    <location>
        <position position="892"/>
    </location>
    <ligand>
        <name>Zn(2+)</name>
        <dbReference type="ChEBI" id="CHEBI:29105"/>
    </ligand>
</feature>
<feature type="binding site" evidence="1">
    <location>
        <position position="894"/>
    </location>
    <ligand>
        <name>Zn(2+)</name>
        <dbReference type="ChEBI" id="CHEBI:29105"/>
    </ligand>
</feature>
<feature type="binding site" evidence="1">
    <location>
        <position position="903"/>
    </location>
    <ligand>
        <name>Zn(2+)</name>
        <dbReference type="ChEBI" id="CHEBI:29105"/>
    </ligand>
</feature>
<feature type="binding site" evidence="1">
    <location>
        <position position="904"/>
    </location>
    <ligand>
        <name>Zn(2+)</name>
        <dbReference type="ChEBI" id="CHEBI:29105"/>
    </ligand>
</feature>
<accession>B5FB28</accession>
<organism>
    <name type="scientific">Aliivibrio fischeri (strain MJ11)</name>
    <name type="common">Vibrio fischeri</name>
    <dbReference type="NCBI Taxonomy" id="388396"/>
    <lineage>
        <taxon>Bacteria</taxon>
        <taxon>Pseudomonadati</taxon>
        <taxon>Pseudomonadota</taxon>
        <taxon>Gammaproteobacteria</taxon>
        <taxon>Vibrionales</taxon>
        <taxon>Vibrionaceae</taxon>
        <taxon>Aliivibrio</taxon>
    </lineage>
</organism>
<comment type="function">
    <text evidence="1">Part of the Sec protein translocase complex. Interacts with the SecYEG preprotein conducting channel. Has a central role in coupling the hydrolysis of ATP to the transfer of proteins into and across the cell membrane, serving both as a receptor for the preprotein-SecB complex and as an ATP-driven molecular motor driving the stepwise translocation of polypeptide chains across the membrane.</text>
</comment>
<comment type="catalytic activity">
    <reaction evidence="1">
        <text>ATP + H2O + cellular proteinSide 1 = ADP + phosphate + cellular proteinSide 2.</text>
        <dbReference type="EC" id="7.4.2.8"/>
    </reaction>
</comment>
<comment type="cofactor">
    <cofactor evidence="1">
        <name>Zn(2+)</name>
        <dbReference type="ChEBI" id="CHEBI:29105"/>
    </cofactor>
    <text evidence="1">May bind 1 zinc ion per subunit.</text>
</comment>
<comment type="subunit">
    <text evidence="1">Monomer and homodimer. Part of the essential Sec protein translocation apparatus which comprises SecA, SecYEG and auxiliary proteins SecDF-YajC and YidC.</text>
</comment>
<comment type="subcellular location">
    <subcellularLocation>
        <location evidence="1">Cell inner membrane</location>
        <topology evidence="1">Peripheral membrane protein</topology>
        <orientation evidence="1">Cytoplasmic side</orientation>
    </subcellularLocation>
    <subcellularLocation>
        <location evidence="1">Cytoplasm</location>
    </subcellularLocation>
    <text evidence="1">Distribution is 50-50.</text>
</comment>
<comment type="similarity">
    <text evidence="1">Belongs to the SecA family.</text>
</comment>
<sequence length="907" mass="103210">MFSKILTKVIGSRNDRTLRKLRKIVDQINKLEPQFESLQDEELKAKTIEFRARLEQGEDLDNLLPEAFATVREASKRLYGMRHFDVQMIGGMVLNDSQIAEMRTGEGKTLTATLPCYLNALTGKGVHVVTVNDYLAKRDAETNRELFEFLGMTVGVNVPNMPPQEKKQAYLCDILYGTNNEFGFDYLRDNMAFRAEDRVQRERYFAVVDEVDSILIDEARTPLIISGPAEDSSELYIRINTLIPQLVKQDEEDSEEYRGEGHYTLDEKGKQTHLTENGQEFVEQLLKDAGLMEEDDTLYSPANISLLHHINAALRAHVLFEKDVDYIVKDDEVIIVDEHTGRTMPGRRWSEGLHQAVEAKEGVKIQNENQTLASITFQNFFRLYEKLSGMTGTADTEAFEFQSIYGLDTVVIPTNRPMARNDMGDLVYMTEAEKFAAIIEDIKGCSERGQPVLVGTVSIEKSELLSNALKKAKIKHNVLNAKFHEQEADIVANAGTASAVTIATNMAGRGTDIVLGGSWQADVAKLSDPTEEQIQAVKAKWKEAHDAVLASGGLHIIGTERHESRRIDNQLRGRAGRQGDAGSSRFYLSMEDALMRIFASDRVSGMMKKLGMEEGEAIEHPWVTKAIENAQRKVEGRNFDIRKQLLEYDDVANDQRKVVYELRDELMNVDDISEMIGYNRQEVLEGLFGQYIPPQSLEEMWDVEGLTTRLRADFDLDLPLQEWLDNDDKLHEDNLREKIIEAAVQVYKEKEESVGESVLRNFEKAVMLQTLDGLWKEHLAAMDHLRQGIHLRGYAQKNPKQEYKRESFELFEGLLDTLKFDVVSILSKVRVQQQEDVERMEEQRRLQAEEAARRQQLQHQNAENQLDDGEGAEEAHSPMVREERKVGRNEPCPCGSGKKYKQCHGKI</sequence>
<dbReference type="EC" id="7.4.2.8" evidence="1"/>
<dbReference type="EMBL" id="CP001139">
    <property type="protein sequence ID" value="ACH66188.1"/>
    <property type="molecule type" value="Genomic_DNA"/>
</dbReference>
<dbReference type="RefSeq" id="WP_012533557.1">
    <property type="nucleotide sequence ID" value="NC_011184.1"/>
</dbReference>
<dbReference type="SMR" id="B5FB28"/>
<dbReference type="KEGG" id="vfm:VFMJ11_2306"/>
<dbReference type="HOGENOM" id="CLU_005314_3_0_6"/>
<dbReference type="Proteomes" id="UP000001857">
    <property type="component" value="Chromosome I"/>
</dbReference>
<dbReference type="GO" id="GO:0031522">
    <property type="term" value="C:cell envelope Sec protein transport complex"/>
    <property type="evidence" value="ECO:0007669"/>
    <property type="project" value="TreeGrafter"/>
</dbReference>
<dbReference type="GO" id="GO:0005829">
    <property type="term" value="C:cytosol"/>
    <property type="evidence" value="ECO:0007669"/>
    <property type="project" value="TreeGrafter"/>
</dbReference>
<dbReference type="GO" id="GO:0005886">
    <property type="term" value="C:plasma membrane"/>
    <property type="evidence" value="ECO:0007669"/>
    <property type="project" value="UniProtKB-SubCell"/>
</dbReference>
<dbReference type="GO" id="GO:0005524">
    <property type="term" value="F:ATP binding"/>
    <property type="evidence" value="ECO:0007669"/>
    <property type="project" value="UniProtKB-UniRule"/>
</dbReference>
<dbReference type="GO" id="GO:0046872">
    <property type="term" value="F:metal ion binding"/>
    <property type="evidence" value="ECO:0007669"/>
    <property type="project" value="UniProtKB-KW"/>
</dbReference>
<dbReference type="GO" id="GO:0008564">
    <property type="term" value="F:protein-exporting ATPase activity"/>
    <property type="evidence" value="ECO:0007669"/>
    <property type="project" value="UniProtKB-EC"/>
</dbReference>
<dbReference type="GO" id="GO:0065002">
    <property type="term" value="P:intracellular protein transmembrane transport"/>
    <property type="evidence" value="ECO:0007669"/>
    <property type="project" value="UniProtKB-UniRule"/>
</dbReference>
<dbReference type="GO" id="GO:0017038">
    <property type="term" value="P:protein import"/>
    <property type="evidence" value="ECO:0007669"/>
    <property type="project" value="InterPro"/>
</dbReference>
<dbReference type="GO" id="GO:0006605">
    <property type="term" value="P:protein targeting"/>
    <property type="evidence" value="ECO:0007669"/>
    <property type="project" value="UniProtKB-UniRule"/>
</dbReference>
<dbReference type="GO" id="GO:0043952">
    <property type="term" value="P:protein transport by the Sec complex"/>
    <property type="evidence" value="ECO:0007669"/>
    <property type="project" value="TreeGrafter"/>
</dbReference>
<dbReference type="CDD" id="cd17928">
    <property type="entry name" value="DEXDc_SecA"/>
    <property type="match status" value="1"/>
</dbReference>
<dbReference type="CDD" id="cd18803">
    <property type="entry name" value="SF2_C_secA"/>
    <property type="match status" value="1"/>
</dbReference>
<dbReference type="FunFam" id="1.10.3060.10:FF:000001">
    <property type="entry name" value="Preprotein translocase subunit SecA"/>
    <property type="match status" value="1"/>
</dbReference>
<dbReference type="FunFam" id="3.40.50.300:FF:000081">
    <property type="entry name" value="Preprotein translocase subunit SecA"/>
    <property type="match status" value="1"/>
</dbReference>
<dbReference type="FunFam" id="3.40.50.300:FF:000113">
    <property type="entry name" value="Preprotein translocase subunit SecA"/>
    <property type="match status" value="1"/>
</dbReference>
<dbReference type="FunFam" id="3.90.1440.10:FF:000001">
    <property type="entry name" value="Preprotein translocase subunit SecA"/>
    <property type="match status" value="1"/>
</dbReference>
<dbReference type="Gene3D" id="1.10.3060.10">
    <property type="entry name" value="Helical scaffold and wing domains of SecA"/>
    <property type="match status" value="1"/>
</dbReference>
<dbReference type="Gene3D" id="3.40.50.300">
    <property type="entry name" value="P-loop containing nucleotide triphosphate hydrolases"/>
    <property type="match status" value="2"/>
</dbReference>
<dbReference type="Gene3D" id="3.90.1440.10">
    <property type="entry name" value="SecA, preprotein cross-linking domain"/>
    <property type="match status" value="1"/>
</dbReference>
<dbReference type="HAMAP" id="MF_01382">
    <property type="entry name" value="SecA"/>
    <property type="match status" value="1"/>
</dbReference>
<dbReference type="InterPro" id="IPR014001">
    <property type="entry name" value="Helicase_ATP-bd"/>
</dbReference>
<dbReference type="InterPro" id="IPR001650">
    <property type="entry name" value="Helicase_C-like"/>
</dbReference>
<dbReference type="InterPro" id="IPR027417">
    <property type="entry name" value="P-loop_NTPase"/>
</dbReference>
<dbReference type="InterPro" id="IPR004027">
    <property type="entry name" value="SEC_C_motif"/>
</dbReference>
<dbReference type="InterPro" id="IPR000185">
    <property type="entry name" value="SecA"/>
</dbReference>
<dbReference type="InterPro" id="IPR020937">
    <property type="entry name" value="SecA_CS"/>
</dbReference>
<dbReference type="InterPro" id="IPR011115">
    <property type="entry name" value="SecA_DEAD"/>
</dbReference>
<dbReference type="InterPro" id="IPR014018">
    <property type="entry name" value="SecA_motor_DEAD"/>
</dbReference>
<dbReference type="InterPro" id="IPR011130">
    <property type="entry name" value="SecA_preprotein_X-link_dom"/>
</dbReference>
<dbReference type="InterPro" id="IPR044722">
    <property type="entry name" value="SecA_SF2_C"/>
</dbReference>
<dbReference type="InterPro" id="IPR011116">
    <property type="entry name" value="SecA_Wing/Scaffold"/>
</dbReference>
<dbReference type="InterPro" id="IPR036266">
    <property type="entry name" value="SecA_Wing/Scaffold_sf"/>
</dbReference>
<dbReference type="InterPro" id="IPR036670">
    <property type="entry name" value="SecA_X-link_sf"/>
</dbReference>
<dbReference type="NCBIfam" id="NF009538">
    <property type="entry name" value="PRK12904.1"/>
    <property type="match status" value="1"/>
</dbReference>
<dbReference type="NCBIfam" id="TIGR00963">
    <property type="entry name" value="secA"/>
    <property type="match status" value="1"/>
</dbReference>
<dbReference type="PANTHER" id="PTHR30612:SF0">
    <property type="entry name" value="CHLOROPLAST PROTEIN-TRANSPORTING ATPASE"/>
    <property type="match status" value="1"/>
</dbReference>
<dbReference type="PANTHER" id="PTHR30612">
    <property type="entry name" value="SECA INNER MEMBRANE COMPONENT OF SEC PROTEIN SECRETION SYSTEM"/>
    <property type="match status" value="1"/>
</dbReference>
<dbReference type="Pfam" id="PF21090">
    <property type="entry name" value="P-loop_SecA"/>
    <property type="match status" value="1"/>
</dbReference>
<dbReference type="Pfam" id="PF02810">
    <property type="entry name" value="SEC-C"/>
    <property type="match status" value="1"/>
</dbReference>
<dbReference type="Pfam" id="PF07517">
    <property type="entry name" value="SecA_DEAD"/>
    <property type="match status" value="1"/>
</dbReference>
<dbReference type="Pfam" id="PF01043">
    <property type="entry name" value="SecA_PP_bind"/>
    <property type="match status" value="1"/>
</dbReference>
<dbReference type="Pfam" id="PF07516">
    <property type="entry name" value="SecA_SW"/>
    <property type="match status" value="1"/>
</dbReference>
<dbReference type="PRINTS" id="PR00906">
    <property type="entry name" value="SECA"/>
</dbReference>
<dbReference type="SMART" id="SM00957">
    <property type="entry name" value="SecA_DEAD"/>
    <property type="match status" value="1"/>
</dbReference>
<dbReference type="SMART" id="SM00958">
    <property type="entry name" value="SecA_PP_bind"/>
    <property type="match status" value="1"/>
</dbReference>
<dbReference type="SUPFAM" id="SSF81886">
    <property type="entry name" value="Helical scaffold and wing domains of SecA"/>
    <property type="match status" value="1"/>
</dbReference>
<dbReference type="SUPFAM" id="SSF52540">
    <property type="entry name" value="P-loop containing nucleoside triphosphate hydrolases"/>
    <property type="match status" value="2"/>
</dbReference>
<dbReference type="SUPFAM" id="SSF81767">
    <property type="entry name" value="Pre-protein crosslinking domain of SecA"/>
    <property type="match status" value="1"/>
</dbReference>
<dbReference type="PROSITE" id="PS01312">
    <property type="entry name" value="SECA"/>
    <property type="match status" value="1"/>
</dbReference>
<dbReference type="PROSITE" id="PS51196">
    <property type="entry name" value="SECA_MOTOR_DEAD"/>
    <property type="match status" value="1"/>
</dbReference>
<name>SECA_ALIFM</name>
<protein>
    <recommendedName>
        <fullName evidence="1">Protein translocase subunit SecA</fullName>
        <ecNumber evidence="1">7.4.2.8</ecNumber>
    </recommendedName>
</protein>
<keyword id="KW-0067">ATP-binding</keyword>
<keyword id="KW-0997">Cell inner membrane</keyword>
<keyword id="KW-1003">Cell membrane</keyword>
<keyword id="KW-0963">Cytoplasm</keyword>
<keyword id="KW-0472">Membrane</keyword>
<keyword id="KW-0479">Metal-binding</keyword>
<keyword id="KW-0547">Nucleotide-binding</keyword>
<keyword id="KW-0653">Protein transport</keyword>
<keyword id="KW-1278">Translocase</keyword>
<keyword id="KW-0811">Translocation</keyword>
<keyword id="KW-0813">Transport</keyword>
<keyword id="KW-0862">Zinc</keyword>
<proteinExistence type="inferred from homology"/>